<comment type="function">
    <text evidence="1">Catalyzes the transfer of endogenously produced octanoic acid from octanoyl-acyl-carrier-protein onto the lipoyl domains of lipoate-dependent enzymes. Lipoyl-ACP can also act as a substrate although octanoyl-ACP is likely to be the physiological substrate.</text>
</comment>
<comment type="catalytic activity">
    <reaction evidence="1">
        <text>octanoyl-[ACP] + L-lysyl-[protein] = N(6)-octanoyl-L-lysyl-[protein] + holo-[ACP] + H(+)</text>
        <dbReference type="Rhea" id="RHEA:17665"/>
        <dbReference type="Rhea" id="RHEA-COMP:9636"/>
        <dbReference type="Rhea" id="RHEA-COMP:9685"/>
        <dbReference type="Rhea" id="RHEA-COMP:9752"/>
        <dbReference type="Rhea" id="RHEA-COMP:9928"/>
        <dbReference type="ChEBI" id="CHEBI:15378"/>
        <dbReference type="ChEBI" id="CHEBI:29969"/>
        <dbReference type="ChEBI" id="CHEBI:64479"/>
        <dbReference type="ChEBI" id="CHEBI:78463"/>
        <dbReference type="ChEBI" id="CHEBI:78809"/>
        <dbReference type="EC" id="2.3.1.181"/>
    </reaction>
</comment>
<comment type="pathway">
    <text evidence="1">Protein modification; protein lipoylation via endogenous pathway; protein N(6)-(lipoyl)lysine from octanoyl-[acyl-carrier-protein]: step 1/2.</text>
</comment>
<comment type="subcellular location">
    <subcellularLocation>
        <location evidence="1">Cytoplasm</location>
    </subcellularLocation>
</comment>
<comment type="miscellaneous">
    <text evidence="1">In the reaction, the free carboxyl group of octanoic acid is attached via an amide linkage to the epsilon-amino group of a specific lysine residue of lipoyl domains of lipoate-dependent enzymes.</text>
</comment>
<comment type="similarity">
    <text evidence="1">Belongs to the LipB family.</text>
</comment>
<name>LIPB_HISS1</name>
<proteinExistence type="inferred from homology"/>
<protein>
    <recommendedName>
        <fullName evidence="1">Octanoyltransferase</fullName>
        <ecNumber evidence="1">2.3.1.181</ecNumber>
    </recommendedName>
    <alternativeName>
        <fullName evidence="1">Lipoate-protein ligase B</fullName>
    </alternativeName>
    <alternativeName>
        <fullName evidence="1">Lipoyl/octanoyl transferase</fullName>
    </alternativeName>
    <alternativeName>
        <fullName evidence="1">Octanoyl-[acyl-carrier-protein]-protein N-octanoyltransferase</fullName>
    </alternativeName>
</protein>
<reference key="1">
    <citation type="journal article" date="2007" name="J. Bacteriol.">
        <title>Complete genome sequence of Haemophilus somnus (Histophilus somni) strain 129Pt and comparison to Haemophilus ducreyi 35000HP and Haemophilus influenzae Rd.</title>
        <authorList>
            <person name="Challacombe J.F."/>
            <person name="Duncan A.J."/>
            <person name="Brettin T.S."/>
            <person name="Bruce D."/>
            <person name="Chertkov O."/>
            <person name="Detter J.C."/>
            <person name="Han C.S."/>
            <person name="Misra M."/>
            <person name="Richardson P."/>
            <person name="Tapia R."/>
            <person name="Thayer N."/>
            <person name="Xie G."/>
            <person name="Inzana T.J."/>
        </authorList>
    </citation>
    <scope>NUCLEOTIDE SEQUENCE [LARGE SCALE GENOMIC DNA]</scope>
    <source>
        <strain>129Pt</strain>
    </source>
</reference>
<gene>
    <name evidence="1" type="primary">lipB</name>
    <name type="ordered locus">HS_0316</name>
</gene>
<evidence type="ECO:0000255" key="1">
    <source>
        <dbReference type="HAMAP-Rule" id="MF_00013"/>
    </source>
</evidence>
<evidence type="ECO:0000255" key="2">
    <source>
        <dbReference type="PROSITE-ProRule" id="PRU01067"/>
    </source>
</evidence>
<accession>Q0I1H7</accession>
<organism>
    <name type="scientific">Histophilus somni (strain 129Pt)</name>
    <name type="common">Haemophilus somnus</name>
    <dbReference type="NCBI Taxonomy" id="205914"/>
    <lineage>
        <taxon>Bacteria</taxon>
        <taxon>Pseudomonadati</taxon>
        <taxon>Pseudomonadota</taxon>
        <taxon>Gammaproteobacteria</taxon>
        <taxon>Pasteurellales</taxon>
        <taxon>Pasteurellaceae</taxon>
        <taxon>Histophilus</taxon>
    </lineage>
</organism>
<feature type="chain" id="PRO_0000321636" description="Octanoyltransferase">
    <location>
        <begin position="1"/>
        <end position="218"/>
    </location>
</feature>
<feature type="domain" description="BPL/LPL catalytic" evidence="2">
    <location>
        <begin position="32"/>
        <end position="214"/>
    </location>
</feature>
<feature type="active site" description="Acyl-thioester intermediate" evidence="1">
    <location>
        <position position="174"/>
    </location>
</feature>
<feature type="binding site" evidence="1">
    <location>
        <begin position="71"/>
        <end position="78"/>
    </location>
    <ligand>
        <name>substrate</name>
    </ligand>
</feature>
<feature type="binding site" evidence="1">
    <location>
        <begin position="143"/>
        <end position="145"/>
    </location>
    <ligand>
        <name>substrate</name>
    </ligand>
</feature>
<feature type="binding site" evidence="1">
    <location>
        <begin position="156"/>
        <end position="158"/>
    </location>
    <ligand>
        <name>substrate</name>
    </ligand>
</feature>
<feature type="site" description="Lowers pKa of active site Cys" evidence="1">
    <location>
        <position position="140"/>
    </location>
</feature>
<sequence length="218" mass="24496">MTDTTLIIRQLGIQDYQQVWQQMREFTDTRNALTPDEIWLVQHPAVFTQGQAGKPEHLLNPTDIPVVQSDRGGQITYHGLGQQIMYVLIDIKRHKANGSELNVRQLVTALEQSVVSTLADYGIKSYPKADAPGVYVNEQKICSLGLRIRKGCSFHGLALNINMDLSPFRQINPCGYIGLEMCQMADFIPTEQAQCDKVAPKLVTHFTQLLGYNDVTTY</sequence>
<keyword id="KW-0012">Acyltransferase</keyword>
<keyword id="KW-0963">Cytoplasm</keyword>
<keyword id="KW-0808">Transferase</keyword>
<dbReference type="EC" id="2.3.1.181" evidence="1"/>
<dbReference type="EMBL" id="CP000436">
    <property type="protein sequence ID" value="ABI24594.1"/>
    <property type="molecule type" value="Genomic_DNA"/>
</dbReference>
<dbReference type="SMR" id="Q0I1H7"/>
<dbReference type="KEGG" id="hso:HS_0316"/>
<dbReference type="eggNOG" id="COG0321">
    <property type="taxonomic scope" value="Bacteria"/>
</dbReference>
<dbReference type="HOGENOM" id="CLU_035168_3_1_6"/>
<dbReference type="UniPathway" id="UPA00538">
    <property type="reaction ID" value="UER00592"/>
</dbReference>
<dbReference type="GO" id="GO:0005737">
    <property type="term" value="C:cytoplasm"/>
    <property type="evidence" value="ECO:0007669"/>
    <property type="project" value="UniProtKB-SubCell"/>
</dbReference>
<dbReference type="GO" id="GO:0033819">
    <property type="term" value="F:lipoyl(octanoyl) transferase activity"/>
    <property type="evidence" value="ECO:0007669"/>
    <property type="project" value="UniProtKB-EC"/>
</dbReference>
<dbReference type="GO" id="GO:0036211">
    <property type="term" value="P:protein modification process"/>
    <property type="evidence" value="ECO:0007669"/>
    <property type="project" value="InterPro"/>
</dbReference>
<dbReference type="CDD" id="cd16444">
    <property type="entry name" value="LipB"/>
    <property type="match status" value="1"/>
</dbReference>
<dbReference type="FunFam" id="3.30.930.10:FF:000020">
    <property type="entry name" value="Octanoyltransferase"/>
    <property type="match status" value="1"/>
</dbReference>
<dbReference type="Gene3D" id="3.30.930.10">
    <property type="entry name" value="Bira Bifunctional Protein, Domain 2"/>
    <property type="match status" value="1"/>
</dbReference>
<dbReference type="HAMAP" id="MF_00013">
    <property type="entry name" value="LipB"/>
    <property type="match status" value="1"/>
</dbReference>
<dbReference type="InterPro" id="IPR045864">
    <property type="entry name" value="aa-tRNA-synth_II/BPL/LPL"/>
</dbReference>
<dbReference type="InterPro" id="IPR004143">
    <property type="entry name" value="BPL_LPL_catalytic"/>
</dbReference>
<dbReference type="InterPro" id="IPR000544">
    <property type="entry name" value="Octanoyltransferase"/>
</dbReference>
<dbReference type="InterPro" id="IPR020605">
    <property type="entry name" value="Octanoyltransferase_CS"/>
</dbReference>
<dbReference type="NCBIfam" id="TIGR00214">
    <property type="entry name" value="lipB"/>
    <property type="match status" value="1"/>
</dbReference>
<dbReference type="NCBIfam" id="NF010922">
    <property type="entry name" value="PRK14342.1"/>
    <property type="match status" value="1"/>
</dbReference>
<dbReference type="PANTHER" id="PTHR10993:SF7">
    <property type="entry name" value="LIPOYLTRANSFERASE 2, MITOCHONDRIAL-RELATED"/>
    <property type="match status" value="1"/>
</dbReference>
<dbReference type="PANTHER" id="PTHR10993">
    <property type="entry name" value="OCTANOYLTRANSFERASE"/>
    <property type="match status" value="1"/>
</dbReference>
<dbReference type="Pfam" id="PF21948">
    <property type="entry name" value="LplA-B_cat"/>
    <property type="match status" value="1"/>
</dbReference>
<dbReference type="PIRSF" id="PIRSF016262">
    <property type="entry name" value="LPLase"/>
    <property type="match status" value="1"/>
</dbReference>
<dbReference type="SUPFAM" id="SSF55681">
    <property type="entry name" value="Class II aaRS and biotin synthetases"/>
    <property type="match status" value="1"/>
</dbReference>
<dbReference type="PROSITE" id="PS51733">
    <property type="entry name" value="BPL_LPL_CATALYTIC"/>
    <property type="match status" value="1"/>
</dbReference>
<dbReference type="PROSITE" id="PS01313">
    <property type="entry name" value="LIPB"/>
    <property type="match status" value="1"/>
</dbReference>